<name>NDUS3_PROWI</name>
<feature type="chain" id="PRO_0000118648" description="NADH-ubiquinone oxidoreductase subunit 9">
    <location>
        <begin position="1"/>
        <end position="192"/>
    </location>
</feature>
<comment type="function">
    <text evidence="1">Core subunit of the mitochondrial membrane respiratory chain NADH dehydrogenase (Complex I) that is believed to belong to the minimal assembly required for catalysis. Complex I functions in the transfer of electrons from NADH to the respiratory chain. The immediate electron acceptor for the enzyme is believed to be ubiquinone (By similarity).</text>
</comment>
<comment type="catalytic activity">
    <reaction>
        <text>a ubiquinone + NADH + 5 H(+)(in) = a ubiquinol + NAD(+) + 4 H(+)(out)</text>
        <dbReference type="Rhea" id="RHEA:29091"/>
        <dbReference type="Rhea" id="RHEA-COMP:9565"/>
        <dbReference type="Rhea" id="RHEA-COMP:9566"/>
        <dbReference type="ChEBI" id="CHEBI:15378"/>
        <dbReference type="ChEBI" id="CHEBI:16389"/>
        <dbReference type="ChEBI" id="CHEBI:17976"/>
        <dbReference type="ChEBI" id="CHEBI:57540"/>
        <dbReference type="ChEBI" id="CHEBI:57945"/>
        <dbReference type="EC" id="7.1.1.2"/>
    </reaction>
</comment>
<comment type="subunit">
    <text>Complex I is composed of about 30 different subunits.</text>
</comment>
<comment type="subcellular location">
    <subcellularLocation>
        <location evidence="1">Mitochondrion inner membrane</location>
    </subcellularLocation>
    <text evidence="1">Matrix and cytoplasmic side of the mitochondrial inner membrane.</text>
</comment>
<comment type="similarity">
    <text evidence="2">Belongs to the complex I 30 kDa subunit family.</text>
</comment>
<reference key="1">
    <citation type="journal article" date="1994" name="J. Mol. Biol.">
        <title>Complete sequence of the mitochondrial DNA of the chlorophyte alga Prototheca wickerhamii. Gene content and genome organization.</title>
        <authorList>
            <person name="Wolff G."/>
            <person name="Plante I."/>
            <person name="Lang B.F."/>
            <person name="Kueck U."/>
            <person name="Burger G."/>
        </authorList>
    </citation>
    <scope>NUCLEOTIDE SEQUENCE [GENOMIC DNA]</scope>
    <source>
        <strain>263-11</strain>
    </source>
</reference>
<geneLocation type="mitochondrion"/>
<organism>
    <name type="scientific">Prototheca wickerhamii</name>
    <dbReference type="NCBI Taxonomy" id="3111"/>
    <lineage>
        <taxon>Eukaryota</taxon>
        <taxon>Viridiplantae</taxon>
        <taxon>Chlorophyta</taxon>
        <taxon>core chlorophytes</taxon>
        <taxon>Trebouxiophyceae</taxon>
        <taxon>Chlorellales</taxon>
        <taxon>Chlorellaceae</taxon>
        <taxon>Prototheca</taxon>
    </lineage>
</organism>
<dbReference type="EC" id="7.1.1.2"/>
<dbReference type="EMBL" id="U02970">
    <property type="protein sequence ID" value="AAD12649.1"/>
    <property type="molecule type" value="Genomic_DNA"/>
</dbReference>
<dbReference type="PIR" id="T11930">
    <property type="entry name" value="T11930"/>
</dbReference>
<dbReference type="RefSeq" id="NP_042261.1">
    <property type="nucleotide sequence ID" value="NC_001613.1"/>
</dbReference>
<dbReference type="SMR" id="Q37622"/>
<dbReference type="GeneID" id="802143"/>
<dbReference type="GO" id="GO:0005743">
    <property type="term" value="C:mitochondrial inner membrane"/>
    <property type="evidence" value="ECO:0007669"/>
    <property type="project" value="UniProtKB-SubCell"/>
</dbReference>
<dbReference type="GO" id="GO:0008137">
    <property type="term" value="F:NADH dehydrogenase (ubiquinone) activity"/>
    <property type="evidence" value="ECO:0007669"/>
    <property type="project" value="UniProtKB-EC"/>
</dbReference>
<dbReference type="FunFam" id="3.30.460.80:FF:000002">
    <property type="entry name" value="NADH dehydrogenase iron-sulfur protein 3, mitochondrial"/>
    <property type="match status" value="1"/>
</dbReference>
<dbReference type="Gene3D" id="3.30.460.80">
    <property type="entry name" value="NADH:ubiquinone oxidoreductase, 30kDa subunit"/>
    <property type="match status" value="1"/>
</dbReference>
<dbReference type="HAMAP" id="MF_01357">
    <property type="entry name" value="NDH1_NuoC"/>
    <property type="match status" value="1"/>
</dbReference>
<dbReference type="InterPro" id="IPR010218">
    <property type="entry name" value="NADH_DH_suC"/>
</dbReference>
<dbReference type="InterPro" id="IPR037232">
    <property type="entry name" value="NADH_quin_OxRdtase_su_C/D-like"/>
</dbReference>
<dbReference type="InterPro" id="IPR001268">
    <property type="entry name" value="NADH_UbQ_OxRdtase_30kDa_su"/>
</dbReference>
<dbReference type="InterPro" id="IPR020396">
    <property type="entry name" value="NADH_UbQ_OxRdtase_CS"/>
</dbReference>
<dbReference type="NCBIfam" id="TIGR01961">
    <property type="entry name" value="NuoC_fam"/>
    <property type="match status" value="1"/>
</dbReference>
<dbReference type="NCBIfam" id="NF004733">
    <property type="entry name" value="PRK06074.1-5"/>
    <property type="match status" value="1"/>
</dbReference>
<dbReference type="PANTHER" id="PTHR10884:SF14">
    <property type="entry name" value="NADH DEHYDROGENASE [UBIQUINONE] IRON-SULFUR PROTEIN 3, MITOCHONDRIAL"/>
    <property type="match status" value="1"/>
</dbReference>
<dbReference type="PANTHER" id="PTHR10884">
    <property type="entry name" value="NADH DEHYDROGENASE UBIQUINONE IRON-SULFUR PROTEIN 3"/>
    <property type="match status" value="1"/>
</dbReference>
<dbReference type="Pfam" id="PF00329">
    <property type="entry name" value="Complex1_30kDa"/>
    <property type="match status" value="1"/>
</dbReference>
<dbReference type="SUPFAM" id="SSF143243">
    <property type="entry name" value="Nqo5-like"/>
    <property type="match status" value="1"/>
</dbReference>
<dbReference type="PROSITE" id="PS00542">
    <property type="entry name" value="COMPLEX1_30K"/>
    <property type="match status" value="1"/>
</dbReference>
<evidence type="ECO:0000250" key="1"/>
<evidence type="ECO:0000305" key="2"/>
<proteinExistence type="inferred from homology"/>
<protein>
    <recommendedName>
        <fullName>NADH-ubiquinone oxidoreductase subunit 9</fullName>
        <ecNumber>7.1.1.2</ecNumber>
    </recommendedName>
</protein>
<sequence>MNNNFEKSILLMVPQWIQYHVSHRNETTFYVYPEYLKPFLYFLRDHMSTQYKVCIDITAADYPSRASRFECVYNLLSVEYNSRIRIKTCVDEITTLESVTPVYSSAAWWEREVWDMFGVFFHNHPDLRRILTDYGFQGHPLRKDFPLSGYVEVRYDDSEKRVCIESVEYSQEFRYFDFESPWEQVDKNSLLK</sequence>
<accession>Q37622</accession>
<keyword id="KW-0249">Electron transport</keyword>
<keyword id="KW-0472">Membrane</keyword>
<keyword id="KW-0496">Mitochondrion</keyword>
<keyword id="KW-0999">Mitochondrion inner membrane</keyword>
<keyword id="KW-0520">NAD</keyword>
<keyword id="KW-0560">Oxidoreductase</keyword>
<keyword id="KW-0679">Respiratory chain</keyword>
<keyword id="KW-1278">Translocase</keyword>
<keyword id="KW-0813">Transport</keyword>
<keyword id="KW-0830">Ubiquinone</keyword>
<gene>
    <name type="primary">NAD9</name>
</gene>